<sequence>MSFLIVANWKMNGMRSSFVDFIGKLNNKSNEITSKLVICPPFTSFPSSIELNNNIDIGAQNCHHKKFGSYTGEISAEMLKELGCTYVMLGHSERANEKDSEIKLKSEIAIESGLHPIICVGENSEDYKNEKTKEVIEYQCKNRLPTHGEYTVAYEPIWAIGTGHVPNNDAIAKVIEVIKLCTSKKHIIYGGSVSSENIENLLSISNLSGVLIGSASLDFDHFYKIIQQVEKKFSLINSKISN</sequence>
<organism>
    <name type="scientific">Wolbachia pipientis wMel</name>
    <dbReference type="NCBI Taxonomy" id="163164"/>
    <lineage>
        <taxon>Bacteria</taxon>
        <taxon>Pseudomonadati</taxon>
        <taxon>Pseudomonadota</taxon>
        <taxon>Alphaproteobacteria</taxon>
        <taxon>Rickettsiales</taxon>
        <taxon>Anaplasmataceae</taxon>
        <taxon>Wolbachieae</taxon>
        <taxon>Wolbachia</taxon>
    </lineage>
</organism>
<gene>
    <name evidence="1" type="primary">tpiA</name>
    <name type="ordered locus">WD_0091</name>
</gene>
<name>TPIS_WOLPM</name>
<reference key="1">
    <citation type="journal article" date="2004" name="PLoS Biol.">
        <title>Phylogenomics of the reproductive parasite Wolbachia pipientis wMel: a streamlined genome overrun by mobile genetic elements.</title>
        <authorList>
            <person name="Wu M."/>
            <person name="Sun L.V."/>
            <person name="Vamathevan J.J."/>
            <person name="Riegler M."/>
            <person name="DeBoy R.T."/>
            <person name="Brownlie J.C."/>
            <person name="McGraw E.A."/>
            <person name="Martin W."/>
            <person name="Esser C."/>
            <person name="Ahmadinejad N."/>
            <person name="Wiegand C."/>
            <person name="Madupu R."/>
            <person name="Beanan M.J."/>
            <person name="Brinkac L.M."/>
            <person name="Daugherty S.C."/>
            <person name="Durkin A.S."/>
            <person name="Kolonay J.F."/>
            <person name="Nelson W.C."/>
            <person name="Mohamoud Y."/>
            <person name="Lee P."/>
            <person name="Berry K.J."/>
            <person name="Young M.B."/>
            <person name="Utterback T.R."/>
            <person name="Weidman J.F."/>
            <person name="Nierman W.C."/>
            <person name="Paulsen I.T."/>
            <person name="Nelson K.E."/>
            <person name="Tettelin H."/>
            <person name="O'Neill S.L."/>
            <person name="Eisen J.A."/>
        </authorList>
    </citation>
    <scope>NUCLEOTIDE SEQUENCE [LARGE SCALE GENOMIC DNA]</scope>
</reference>
<keyword id="KW-0963">Cytoplasm</keyword>
<keyword id="KW-0312">Gluconeogenesis</keyword>
<keyword id="KW-0324">Glycolysis</keyword>
<keyword id="KW-0413">Isomerase</keyword>
<dbReference type="EC" id="5.3.1.1" evidence="1"/>
<dbReference type="EMBL" id="AE017196">
    <property type="protein sequence ID" value="AAS13849.1"/>
    <property type="molecule type" value="Genomic_DNA"/>
</dbReference>
<dbReference type="RefSeq" id="WP_010962359.1">
    <property type="nucleotide sequence ID" value="NZ_OX384529.1"/>
</dbReference>
<dbReference type="SMR" id="Q73IR2"/>
<dbReference type="EnsemblBacteria" id="AAS13849">
    <property type="protein sequence ID" value="AAS13849"/>
    <property type="gene ID" value="WD_0091"/>
</dbReference>
<dbReference type="KEGG" id="wol:WD_0091"/>
<dbReference type="eggNOG" id="COG0149">
    <property type="taxonomic scope" value="Bacteria"/>
</dbReference>
<dbReference type="UniPathway" id="UPA00109">
    <property type="reaction ID" value="UER00189"/>
</dbReference>
<dbReference type="UniPathway" id="UPA00138"/>
<dbReference type="Proteomes" id="UP000008215">
    <property type="component" value="Chromosome"/>
</dbReference>
<dbReference type="GO" id="GO:0005829">
    <property type="term" value="C:cytosol"/>
    <property type="evidence" value="ECO:0007669"/>
    <property type="project" value="TreeGrafter"/>
</dbReference>
<dbReference type="GO" id="GO:0004807">
    <property type="term" value="F:triose-phosphate isomerase activity"/>
    <property type="evidence" value="ECO:0007669"/>
    <property type="project" value="UniProtKB-UniRule"/>
</dbReference>
<dbReference type="GO" id="GO:0006094">
    <property type="term" value="P:gluconeogenesis"/>
    <property type="evidence" value="ECO:0007669"/>
    <property type="project" value="UniProtKB-UniRule"/>
</dbReference>
<dbReference type="GO" id="GO:0046166">
    <property type="term" value="P:glyceraldehyde-3-phosphate biosynthetic process"/>
    <property type="evidence" value="ECO:0007669"/>
    <property type="project" value="TreeGrafter"/>
</dbReference>
<dbReference type="GO" id="GO:0019563">
    <property type="term" value="P:glycerol catabolic process"/>
    <property type="evidence" value="ECO:0007669"/>
    <property type="project" value="TreeGrafter"/>
</dbReference>
<dbReference type="GO" id="GO:0006096">
    <property type="term" value="P:glycolytic process"/>
    <property type="evidence" value="ECO:0007669"/>
    <property type="project" value="UniProtKB-UniRule"/>
</dbReference>
<dbReference type="CDD" id="cd00311">
    <property type="entry name" value="TIM"/>
    <property type="match status" value="1"/>
</dbReference>
<dbReference type="Gene3D" id="3.20.20.70">
    <property type="entry name" value="Aldolase class I"/>
    <property type="match status" value="1"/>
</dbReference>
<dbReference type="HAMAP" id="MF_00147_B">
    <property type="entry name" value="TIM_B"/>
    <property type="match status" value="1"/>
</dbReference>
<dbReference type="InterPro" id="IPR013785">
    <property type="entry name" value="Aldolase_TIM"/>
</dbReference>
<dbReference type="InterPro" id="IPR035990">
    <property type="entry name" value="TIM_sf"/>
</dbReference>
<dbReference type="InterPro" id="IPR022896">
    <property type="entry name" value="TrioseP_Isoase_bac/euk"/>
</dbReference>
<dbReference type="InterPro" id="IPR000652">
    <property type="entry name" value="Triosephosphate_isomerase"/>
</dbReference>
<dbReference type="InterPro" id="IPR020861">
    <property type="entry name" value="Triosephosphate_isomerase_AS"/>
</dbReference>
<dbReference type="NCBIfam" id="NF011163">
    <property type="entry name" value="PRK14565.1"/>
    <property type="match status" value="1"/>
</dbReference>
<dbReference type="NCBIfam" id="TIGR00419">
    <property type="entry name" value="tim"/>
    <property type="match status" value="1"/>
</dbReference>
<dbReference type="PANTHER" id="PTHR21139">
    <property type="entry name" value="TRIOSEPHOSPHATE ISOMERASE"/>
    <property type="match status" value="1"/>
</dbReference>
<dbReference type="PANTHER" id="PTHR21139:SF42">
    <property type="entry name" value="TRIOSEPHOSPHATE ISOMERASE"/>
    <property type="match status" value="1"/>
</dbReference>
<dbReference type="Pfam" id="PF00121">
    <property type="entry name" value="TIM"/>
    <property type="match status" value="1"/>
</dbReference>
<dbReference type="SUPFAM" id="SSF51351">
    <property type="entry name" value="Triosephosphate isomerase (TIM)"/>
    <property type="match status" value="1"/>
</dbReference>
<dbReference type="PROSITE" id="PS00171">
    <property type="entry name" value="TIM_1"/>
    <property type="match status" value="1"/>
</dbReference>
<dbReference type="PROSITE" id="PS51440">
    <property type="entry name" value="TIM_2"/>
    <property type="match status" value="1"/>
</dbReference>
<proteinExistence type="inferred from homology"/>
<evidence type="ECO:0000255" key="1">
    <source>
        <dbReference type="HAMAP-Rule" id="MF_00147"/>
    </source>
</evidence>
<protein>
    <recommendedName>
        <fullName evidence="1">Triosephosphate isomerase</fullName>
        <shortName evidence="1">TIM</shortName>
        <shortName evidence="1">TPI</shortName>
        <ecNumber evidence="1">5.3.1.1</ecNumber>
    </recommendedName>
    <alternativeName>
        <fullName evidence="1">Triose-phosphate isomerase</fullName>
    </alternativeName>
</protein>
<feature type="chain" id="PRO_1000009861" description="Triosephosphate isomerase">
    <location>
        <begin position="1"/>
        <end position="242"/>
    </location>
</feature>
<feature type="active site" description="Electrophile" evidence="1">
    <location>
        <position position="91"/>
    </location>
</feature>
<feature type="active site" description="Proton acceptor" evidence="1">
    <location>
        <position position="155"/>
    </location>
</feature>
<feature type="binding site" evidence="1">
    <location>
        <begin position="8"/>
        <end position="10"/>
    </location>
    <ligand>
        <name>substrate</name>
    </ligand>
</feature>
<feature type="binding site" evidence="1">
    <location>
        <position position="161"/>
    </location>
    <ligand>
        <name>substrate</name>
    </ligand>
</feature>
<feature type="binding site" evidence="1">
    <location>
        <position position="192"/>
    </location>
    <ligand>
        <name>substrate</name>
    </ligand>
</feature>
<comment type="function">
    <text evidence="1">Involved in the gluconeogenesis. Catalyzes stereospecifically the conversion of dihydroxyacetone phosphate (DHAP) to D-glyceraldehyde-3-phosphate (G3P).</text>
</comment>
<comment type="catalytic activity">
    <reaction evidence="1">
        <text>D-glyceraldehyde 3-phosphate = dihydroxyacetone phosphate</text>
        <dbReference type="Rhea" id="RHEA:18585"/>
        <dbReference type="ChEBI" id="CHEBI:57642"/>
        <dbReference type="ChEBI" id="CHEBI:59776"/>
        <dbReference type="EC" id="5.3.1.1"/>
    </reaction>
</comment>
<comment type="pathway">
    <text evidence="1">Carbohydrate biosynthesis; gluconeogenesis.</text>
</comment>
<comment type="pathway">
    <text evidence="1">Carbohydrate degradation; glycolysis; D-glyceraldehyde 3-phosphate from glycerone phosphate: step 1/1.</text>
</comment>
<comment type="subunit">
    <text evidence="1">Homodimer.</text>
</comment>
<comment type="subcellular location">
    <subcellularLocation>
        <location evidence="1">Cytoplasm</location>
    </subcellularLocation>
</comment>
<comment type="similarity">
    <text evidence="1">Belongs to the triosephosphate isomerase family.</text>
</comment>
<accession>Q73IR2</accession>